<accession>A4YT74</accession>
<reference key="1">
    <citation type="journal article" date="2007" name="Science">
        <title>Legumes symbioses: absence of nod genes in photosynthetic bradyrhizobia.</title>
        <authorList>
            <person name="Giraud E."/>
            <person name="Moulin L."/>
            <person name="Vallenet D."/>
            <person name="Barbe V."/>
            <person name="Cytryn E."/>
            <person name="Avarre J.-C."/>
            <person name="Jaubert M."/>
            <person name="Simon D."/>
            <person name="Cartieaux F."/>
            <person name="Prin Y."/>
            <person name="Bena G."/>
            <person name="Hannibal L."/>
            <person name="Fardoux J."/>
            <person name="Kojadinovic M."/>
            <person name="Vuillet L."/>
            <person name="Lajus A."/>
            <person name="Cruveiller S."/>
            <person name="Rouy Z."/>
            <person name="Mangenot S."/>
            <person name="Segurens B."/>
            <person name="Dossat C."/>
            <person name="Franck W.L."/>
            <person name="Chang W.-S."/>
            <person name="Saunders E."/>
            <person name="Bruce D."/>
            <person name="Richardson P."/>
            <person name="Normand P."/>
            <person name="Dreyfus B."/>
            <person name="Pignol D."/>
            <person name="Stacey G."/>
            <person name="Emerich D."/>
            <person name="Vermeglio A."/>
            <person name="Medigue C."/>
            <person name="Sadowsky M."/>
        </authorList>
    </citation>
    <scope>NUCLEOTIDE SEQUENCE [LARGE SCALE GENOMIC DNA]</scope>
    <source>
        <strain>ORS 278</strain>
    </source>
</reference>
<dbReference type="EMBL" id="CU234118">
    <property type="protein sequence ID" value="CAL77100.1"/>
    <property type="molecule type" value="Genomic_DNA"/>
</dbReference>
<dbReference type="RefSeq" id="WP_011926258.1">
    <property type="nucleotide sequence ID" value="NC_009445.1"/>
</dbReference>
<dbReference type="SMR" id="A4YT74"/>
<dbReference type="STRING" id="114615.BRADO3306"/>
<dbReference type="KEGG" id="bra:BRADO3306"/>
<dbReference type="eggNOG" id="COG0359">
    <property type="taxonomic scope" value="Bacteria"/>
</dbReference>
<dbReference type="HOGENOM" id="CLU_078938_1_0_5"/>
<dbReference type="OrthoDB" id="9788336at2"/>
<dbReference type="Proteomes" id="UP000001994">
    <property type="component" value="Chromosome"/>
</dbReference>
<dbReference type="GO" id="GO:1990904">
    <property type="term" value="C:ribonucleoprotein complex"/>
    <property type="evidence" value="ECO:0007669"/>
    <property type="project" value="UniProtKB-KW"/>
</dbReference>
<dbReference type="GO" id="GO:0005840">
    <property type="term" value="C:ribosome"/>
    <property type="evidence" value="ECO:0007669"/>
    <property type="project" value="UniProtKB-KW"/>
</dbReference>
<dbReference type="GO" id="GO:0019843">
    <property type="term" value="F:rRNA binding"/>
    <property type="evidence" value="ECO:0007669"/>
    <property type="project" value="UniProtKB-UniRule"/>
</dbReference>
<dbReference type="GO" id="GO:0003735">
    <property type="term" value="F:structural constituent of ribosome"/>
    <property type="evidence" value="ECO:0007669"/>
    <property type="project" value="InterPro"/>
</dbReference>
<dbReference type="GO" id="GO:0006412">
    <property type="term" value="P:translation"/>
    <property type="evidence" value="ECO:0007669"/>
    <property type="project" value="UniProtKB-UniRule"/>
</dbReference>
<dbReference type="Gene3D" id="3.10.430.100">
    <property type="entry name" value="Ribosomal protein L9, C-terminal domain"/>
    <property type="match status" value="1"/>
</dbReference>
<dbReference type="Gene3D" id="3.40.5.10">
    <property type="entry name" value="Ribosomal protein L9, N-terminal domain"/>
    <property type="match status" value="1"/>
</dbReference>
<dbReference type="HAMAP" id="MF_00503">
    <property type="entry name" value="Ribosomal_bL9"/>
    <property type="match status" value="1"/>
</dbReference>
<dbReference type="InterPro" id="IPR000244">
    <property type="entry name" value="Ribosomal_bL9"/>
</dbReference>
<dbReference type="InterPro" id="IPR009027">
    <property type="entry name" value="Ribosomal_bL9/RNase_H1_N"/>
</dbReference>
<dbReference type="InterPro" id="IPR020594">
    <property type="entry name" value="Ribosomal_bL9_bac/chp"/>
</dbReference>
<dbReference type="InterPro" id="IPR020069">
    <property type="entry name" value="Ribosomal_bL9_C"/>
</dbReference>
<dbReference type="InterPro" id="IPR036791">
    <property type="entry name" value="Ribosomal_bL9_C_sf"/>
</dbReference>
<dbReference type="InterPro" id="IPR020070">
    <property type="entry name" value="Ribosomal_bL9_N"/>
</dbReference>
<dbReference type="InterPro" id="IPR036935">
    <property type="entry name" value="Ribosomal_bL9_N_sf"/>
</dbReference>
<dbReference type="NCBIfam" id="TIGR00158">
    <property type="entry name" value="L9"/>
    <property type="match status" value="1"/>
</dbReference>
<dbReference type="PANTHER" id="PTHR21368">
    <property type="entry name" value="50S RIBOSOMAL PROTEIN L9"/>
    <property type="match status" value="1"/>
</dbReference>
<dbReference type="Pfam" id="PF03948">
    <property type="entry name" value="Ribosomal_L9_C"/>
    <property type="match status" value="1"/>
</dbReference>
<dbReference type="Pfam" id="PF01281">
    <property type="entry name" value="Ribosomal_L9_N"/>
    <property type="match status" value="1"/>
</dbReference>
<dbReference type="SUPFAM" id="SSF55658">
    <property type="entry name" value="L9 N-domain-like"/>
    <property type="match status" value="1"/>
</dbReference>
<dbReference type="SUPFAM" id="SSF55653">
    <property type="entry name" value="Ribosomal protein L9 C-domain"/>
    <property type="match status" value="1"/>
</dbReference>
<dbReference type="PROSITE" id="PS00651">
    <property type="entry name" value="RIBOSOMAL_L9"/>
    <property type="match status" value="1"/>
</dbReference>
<keyword id="KW-1185">Reference proteome</keyword>
<keyword id="KW-0687">Ribonucleoprotein</keyword>
<keyword id="KW-0689">Ribosomal protein</keyword>
<keyword id="KW-0694">RNA-binding</keyword>
<keyword id="KW-0699">rRNA-binding</keyword>
<organism>
    <name type="scientific">Bradyrhizobium sp. (strain ORS 278)</name>
    <dbReference type="NCBI Taxonomy" id="114615"/>
    <lineage>
        <taxon>Bacteria</taxon>
        <taxon>Pseudomonadati</taxon>
        <taxon>Pseudomonadota</taxon>
        <taxon>Alphaproteobacteria</taxon>
        <taxon>Hyphomicrobiales</taxon>
        <taxon>Nitrobacteraceae</taxon>
        <taxon>Bradyrhizobium</taxon>
    </lineage>
</organism>
<evidence type="ECO:0000255" key="1">
    <source>
        <dbReference type="HAMAP-Rule" id="MF_00503"/>
    </source>
</evidence>
<evidence type="ECO:0000305" key="2"/>
<gene>
    <name evidence="1" type="primary">rplI</name>
    <name type="ordered locus">BRADO3306</name>
</gene>
<proteinExistence type="inferred from homology"/>
<name>RL9_BRASO</name>
<protein>
    <recommendedName>
        <fullName evidence="1">Large ribosomal subunit protein bL9</fullName>
    </recommendedName>
    <alternativeName>
        <fullName evidence="2">50S ribosomal protein L9</fullName>
    </alternativeName>
</protein>
<comment type="function">
    <text evidence="1">Binds to the 23S rRNA.</text>
</comment>
<comment type="similarity">
    <text evidence="1">Belongs to the bacterial ribosomal protein bL9 family.</text>
</comment>
<feature type="chain" id="PRO_1000014746" description="Large ribosomal subunit protein bL9">
    <location>
        <begin position="1"/>
        <end position="196"/>
    </location>
</feature>
<sequence>MEVILLERVAKLGQMGEIVKVKDGFARNFLLKRKKALRATAENKAKYEGMKAELEANNIKAKGEAAKVAEKIDGRDIVVIRQASESGQLFGSVSVRDIVDALAADGITVSRPQVWLDAPIKTIGQQKVTIAIHPEVETSVTVTVARSADEAERIKRGEDISTRQEDRDAAAEAIAAAGEFFDPEAQEEAAGEPAAQ</sequence>